<keyword id="KW-1185">Reference proteome</keyword>
<keyword id="KW-0808">Transferase</keyword>
<name>SCOA_MYCBO</name>
<gene>
    <name type="primary">scoA</name>
    <name type="ordered locus">BQ2027_MB2532C</name>
</gene>
<feature type="chain" id="PRO_0000157912" description="Probable succinyl-CoA:3-ketoacid coenzyme A transferase subunit A">
    <location>
        <begin position="1"/>
        <end position="248"/>
    </location>
</feature>
<feature type="binding site" evidence="2">
    <location>
        <begin position="24"/>
        <end position="30"/>
    </location>
    <ligand>
        <name>CoA</name>
        <dbReference type="ChEBI" id="CHEBI:57287"/>
    </ligand>
</feature>
<protein>
    <recommendedName>
        <fullName>Probable succinyl-CoA:3-ketoacid coenzyme A transferase subunit A</fullName>
        <ecNumber>2.8.3.5</ecNumber>
    </recommendedName>
    <alternativeName>
        <fullName>Succinyl-CoA:3-oxoacid CoA-transferase</fullName>
        <shortName>OXCT A</shortName>
    </alternativeName>
</protein>
<accession>P63649</accession>
<accession>A0A1R3Y1S8</accession>
<accession>O06167</accession>
<accession>X2BKZ9</accession>
<proteinExistence type="inferred from homology"/>
<comment type="catalytic activity">
    <reaction>
        <text>a 3-oxo acid + succinyl-CoA = a 3-oxoacyl-CoA + succinate</text>
        <dbReference type="Rhea" id="RHEA:24564"/>
        <dbReference type="ChEBI" id="CHEBI:30031"/>
        <dbReference type="ChEBI" id="CHEBI:35973"/>
        <dbReference type="ChEBI" id="CHEBI:57292"/>
        <dbReference type="ChEBI" id="CHEBI:90726"/>
        <dbReference type="EC" id="2.8.3.5"/>
    </reaction>
</comment>
<comment type="subunit">
    <text evidence="1">Heterodimer of a subunit A and a subunit B.</text>
</comment>
<comment type="similarity">
    <text evidence="3">Belongs to the 3-oxoacid CoA-transferase subunit A family.</text>
</comment>
<evidence type="ECO:0000250" key="1"/>
<evidence type="ECO:0000255" key="2"/>
<evidence type="ECO:0000305" key="3"/>
<organism>
    <name type="scientific">Mycobacterium bovis (strain ATCC BAA-935 / AF2122/97)</name>
    <dbReference type="NCBI Taxonomy" id="233413"/>
    <lineage>
        <taxon>Bacteria</taxon>
        <taxon>Bacillati</taxon>
        <taxon>Actinomycetota</taxon>
        <taxon>Actinomycetes</taxon>
        <taxon>Mycobacteriales</taxon>
        <taxon>Mycobacteriaceae</taxon>
        <taxon>Mycobacterium</taxon>
        <taxon>Mycobacterium tuberculosis complex</taxon>
    </lineage>
</organism>
<sequence length="248" mass="26276">MDKVVATAAEAVADIANGSSLAVGGFGLCGIPEALIAALVDSGVTDLETVSNNCGIDGVGLGLLLQHKRIRRTVSSYVGENKEFARQFLAGELEVELTPQGTLAERLRAGGMGIPAFYTPAGVGTQVADGGLPWRYDASGGVAVVSPAKETREFDGVTYVLERGIRTDFALVHAWQGDRHGNLMYRHAAANFNPECASAGRITIAEVEHLVEPGEIDPATVHTPGVFVHRVVHVPNPAKKIERETVRQ</sequence>
<dbReference type="EC" id="2.8.3.5"/>
<dbReference type="EMBL" id="LT708304">
    <property type="protein sequence ID" value="SIU01148.1"/>
    <property type="molecule type" value="Genomic_DNA"/>
</dbReference>
<dbReference type="RefSeq" id="NP_856177.1">
    <property type="nucleotide sequence ID" value="NC_002945.3"/>
</dbReference>
<dbReference type="RefSeq" id="WP_003412786.1">
    <property type="nucleotide sequence ID" value="NC_002945.4"/>
</dbReference>
<dbReference type="SMR" id="P63649"/>
<dbReference type="KEGG" id="mbo:BQ2027_MB2532C"/>
<dbReference type="PATRIC" id="fig|233413.5.peg.2787"/>
<dbReference type="Proteomes" id="UP000001419">
    <property type="component" value="Chromosome"/>
</dbReference>
<dbReference type="GO" id="GO:0008260">
    <property type="term" value="F:succinyl-CoA:3-oxo-acid CoA-transferase activity"/>
    <property type="evidence" value="ECO:0007669"/>
    <property type="project" value="UniProtKB-EC"/>
</dbReference>
<dbReference type="Gene3D" id="3.40.1080.10">
    <property type="entry name" value="Glutaconate Coenzyme A-transferase"/>
    <property type="match status" value="1"/>
</dbReference>
<dbReference type="InterPro" id="IPR012792">
    <property type="entry name" value="3-oxoacid_CoA-transf_A"/>
</dbReference>
<dbReference type="InterPro" id="IPR004165">
    <property type="entry name" value="CoA_trans_fam_I"/>
</dbReference>
<dbReference type="InterPro" id="IPR004163">
    <property type="entry name" value="CoA_transf_BS"/>
</dbReference>
<dbReference type="InterPro" id="IPR037171">
    <property type="entry name" value="NagB/RpiA_transferase-like"/>
</dbReference>
<dbReference type="NCBIfam" id="TIGR02429">
    <property type="entry name" value="pcaI_scoA_fam"/>
    <property type="match status" value="1"/>
</dbReference>
<dbReference type="PANTHER" id="PTHR13707:SF60">
    <property type="entry name" value="ACETATE COA-TRANSFERASE SUBUNIT ALPHA"/>
    <property type="match status" value="1"/>
</dbReference>
<dbReference type="PANTHER" id="PTHR13707">
    <property type="entry name" value="KETOACID-COENZYME A TRANSFERASE"/>
    <property type="match status" value="1"/>
</dbReference>
<dbReference type="Pfam" id="PF01144">
    <property type="entry name" value="CoA_trans"/>
    <property type="match status" value="1"/>
</dbReference>
<dbReference type="SMART" id="SM00882">
    <property type="entry name" value="CoA_trans"/>
    <property type="match status" value="1"/>
</dbReference>
<dbReference type="SUPFAM" id="SSF100950">
    <property type="entry name" value="NagB/RpiA/CoA transferase-like"/>
    <property type="match status" value="1"/>
</dbReference>
<dbReference type="PROSITE" id="PS01273">
    <property type="entry name" value="COA_TRANSF_1"/>
    <property type="match status" value="1"/>
</dbReference>
<reference key="1">
    <citation type="journal article" date="2003" name="Proc. Natl. Acad. Sci. U.S.A.">
        <title>The complete genome sequence of Mycobacterium bovis.</title>
        <authorList>
            <person name="Garnier T."/>
            <person name="Eiglmeier K."/>
            <person name="Camus J.-C."/>
            <person name="Medina N."/>
            <person name="Mansoor H."/>
            <person name="Pryor M."/>
            <person name="Duthoy S."/>
            <person name="Grondin S."/>
            <person name="Lacroix C."/>
            <person name="Monsempe C."/>
            <person name="Simon S."/>
            <person name="Harris B."/>
            <person name="Atkin R."/>
            <person name="Doggett J."/>
            <person name="Mayes R."/>
            <person name="Keating L."/>
            <person name="Wheeler P.R."/>
            <person name="Parkhill J."/>
            <person name="Barrell B.G."/>
            <person name="Cole S.T."/>
            <person name="Gordon S.V."/>
            <person name="Hewinson R.G."/>
        </authorList>
    </citation>
    <scope>NUCLEOTIDE SEQUENCE [LARGE SCALE GENOMIC DNA]</scope>
    <source>
        <strain>ATCC BAA-935 / AF2122/97</strain>
    </source>
</reference>
<reference key="2">
    <citation type="journal article" date="2017" name="Genome Announc.">
        <title>Updated reference genome sequence and annotation of Mycobacterium bovis AF2122/97.</title>
        <authorList>
            <person name="Malone K.M."/>
            <person name="Farrell D."/>
            <person name="Stuber T.P."/>
            <person name="Schubert O.T."/>
            <person name="Aebersold R."/>
            <person name="Robbe-Austerman S."/>
            <person name="Gordon S.V."/>
        </authorList>
    </citation>
    <scope>NUCLEOTIDE SEQUENCE [LARGE SCALE GENOMIC DNA]</scope>
    <scope>GENOME REANNOTATION</scope>
    <source>
        <strain>ATCC BAA-935 / AF2122/97</strain>
    </source>
</reference>